<name>RL16_LACGA</name>
<reference key="1">
    <citation type="journal article" date="2006" name="Proc. Natl. Acad. Sci. U.S.A.">
        <title>Comparative genomics of the lactic acid bacteria.</title>
        <authorList>
            <person name="Makarova K.S."/>
            <person name="Slesarev A."/>
            <person name="Wolf Y.I."/>
            <person name="Sorokin A."/>
            <person name="Mirkin B."/>
            <person name="Koonin E.V."/>
            <person name="Pavlov A."/>
            <person name="Pavlova N."/>
            <person name="Karamychev V."/>
            <person name="Polouchine N."/>
            <person name="Shakhova V."/>
            <person name="Grigoriev I."/>
            <person name="Lou Y."/>
            <person name="Rohksar D."/>
            <person name="Lucas S."/>
            <person name="Huang K."/>
            <person name="Goodstein D.M."/>
            <person name="Hawkins T."/>
            <person name="Plengvidhya V."/>
            <person name="Welker D."/>
            <person name="Hughes J."/>
            <person name="Goh Y."/>
            <person name="Benson A."/>
            <person name="Baldwin K."/>
            <person name="Lee J.-H."/>
            <person name="Diaz-Muniz I."/>
            <person name="Dosti B."/>
            <person name="Smeianov V."/>
            <person name="Wechter W."/>
            <person name="Barabote R."/>
            <person name="Lorca G."/>
            <person name="Altermann E."/>
            <person name="Barrangou R."/>
            <person name="Ganesan B."/>
            <person name="Xie Y."/>
            <person name="Rawsthorne H."/>
            <person name="Tamir D."/>
            <person name="Parker C."/>
            <person name="Breidt F."/>
            <person name="Broadbent J.R."/>
            <person name="Hutkins R."/>
            <person name="O'Sullivan D."/>
            <person name="Steele J."/>
            <person name="Unlu G."/>
            <person name="Saier M.H. Jr."/>
            <person name="Klaenhammer T."/>
            <person name="Richardson P."/>
            <person name="Kozyavkin S."/>
            <person name="Weimer B.C."/>
            <person name="Mills D.A."/>
        </authorList>
    </citation>
    <scope>NUCLEOTIDE SEQUENCE [LARGE SCALE GENOMIC DNA]</scope>
    <source>
        <strain>ATCC 33323 / DSM 20243 / BCRC 14619 / CIP 102991 / JCM 1131 / KCTC 3163 / NCIMB 11718 / NCTC 13722 / AM63</strain>
    </source>
</reference>
<protein>
    <recommendedName>
        <fullName evidence="1">Large ribosomal subunit protein uL16</fullName>
    </recommendedName>
    <alternativeName>
        <fullName evidence="2">50S ribosomal protein L16</fullName>
    </alternativeName>
</protein>
<comment type="function">
    <text evidence="1">Binds 23S rRNA and is also seen to make contacts with the A and possibly P site tRNAs.</text>
</comment>
<comment type="subunit">
    <text evidence="1">Part of the 50S ribosomal subunit.</text>
</comment>
<comment type="similarity">
    <text evidence="1">Belongs to the universal ribosomal protein uL16 family.</text>
</comment>
<accession>Q046B8</accession>
<dbReference type="EMBL" id="CP000413">
    <property type="protein sequence ID" value="ABJ59704.1"/>
    <property type="molecule type" value="Genomic_DNA"/>
</dbReference>
<dbReference type="RefSeq" id="WP_003647829.1">
    <property type="nucleotide sequence ID" value="NZ_WBMG01000001.1"/>
</dbReference>
<dbReference type="SMR" id="Q046B8"/>
<dbReference type="GeneID" id="48924309"/>
<dbReference type="KEGG" id="lga:LGAS_0298"/>
<dbReference type="HOGENOM" id="CLU_078858_2_1_9"/>
<dbReference type="BioCyc" id="LGAS324831:G1G6Y-296-MONOMER"/>
<dbReference type="Proteomes" id="UP000000664">
    <property type="component" value="Chromosome"/>
</dbReference>
<dbReference type="GO" id="GO:0022625">
    <property type="term" value="C:cytosolic large ribosomal subunit"/>
    <property type="evidence" value="ECO:0007669"/>
    <property type="project" value="TreeGrafter"/>
</dbReference>
<dbReference type="GO" id="GO:0019843">
    <property type="term" value="F:rRNA binding"/>
    <property type="evidence" value="ECO:0007669"/>
    <property type="project" value="UniProtKB-UniRule"/>
</dbReference>
<dbReference type="GO" id="GO:0003735">
    <property type="term" value="F:structural constituent of ribosome"/>
    <property type="evidence" value="ECO:0007669"/>
    <property type="project" value="InterPro"/>
</dbReference>
<dbReference type="GO" id="GO:0000049">
    <property type="term" value="F:tRNA binding"/>
    <property type="evidence" value="ECO:0007669"/>
    <property type="project" value="UniProtKB-KW"/>
</dbReference>
<dbReference type="GO" id="GO:0006412">
    <property type="term" value="P:translation"/>
    <property type="evidence" value="ECO:0007669"/>
    <property type="project" value="UniProtKB-UniRule"/>
</dbReference>
<dbReference type="CDD" id="cd01433">
    <property type="entry name" value="Ribosomal_L16_L10e"/>
    <property type="match status" value="1"/>
</dbReference>
<dbReference type="FunFam" id="3.90.1170.10:FF:000001">
    <property type="entry name" value="50S ribosomal protein L16"/>
    <property type="match status" value="1"/>
</dbReference>
<dbReference type="Gene3D" id="3.90.1170.10">
    <property type="entry name" value="Ribosomal protein L10e/L16"/>
    <property type="match status" value="1"/>
</dbReference>
<dbReference type="HAMAP" id="MF_01342">
    <property type="entry name" value="Ribosomal_uL16"/>
    <property type="match status" value="1"/>
</dbReference>
<dbReference type="InterPro" id="IPR047873">
    <property type="entry name" value="Ribosomal_uL16"/>
</dbReference>
<dbReference type="InterPro" id="IPR000114">
    <property type="entry name" value="Ribosomal_uL16_bact-type"/>
</dbReference>
<dbReference type="InterPro" id="IPR020798">
    <property type="entry name" value="Ribosomal_uL16_CS"/>
</dbReference>
<dbReference type="InterPro" id="IPR016180">
    <property type="entry name" value="Ribosomal_uL16_dom"/>
</dbReference>
<dbReference type="InterPro" id="IPR036920">
    <property type="entry name" value="Ribosomal_uL16_sf"/>
</dbReference>
<dbReference type="NCBIfam" id="TIGR01164">
    <property type="entry name" value="rplP_bact"/>
    <property type="match status" value="1"/>
</dbReference>
<dbReference type="PANTHER" id="PTHR12220">
    <property type="entry name" value="50S/60S RIBOSOMAL PROTEIN L16"/>
    <property type="match status" value="1"/>
</dbReference>
<dbReference type="PANTHER" id="PTHR12220:SF13">
    <property type="entry name" value="LARGE RIBOSOMAL SUBUNIT PROTEIN UL16M"/>
    <property type="match status" value="1"/>
</dbReference>
<dbReference type="Pfam" id="PF00252">
    <property type="entry name" value="Ribosomal_L16"/>
    <property type="match status" value="1"/>
</dbReference>
<dbReference type="PRINTS" id="PR00060">
    <property type="entry name" value="RIBOSOMALL16"/>
</dbReference>
<dbReference type="SUPFAM" id="SSF54686">
    <property type="entry name" value="Ribosomal protein L16p/L10e"/>
    <property type="match status" value="1"/>
</dbReference>
<dbReference type="PROSITE" id="PS00586">
    <property type="entry name" value="RIBOSOMAL_L16_1"/>
    <property type="match status" value="1"/>
</dbReference>
<dbReference type="PROSITE" id="PS00701">
    <property type="entry name" value="RIBOSOMAL_L16_2"/>
    <property type="match status" value="1"/>
</dbReference>
<gene>
    <name evidence="1" type="primary">rplP</name>
    <name type="ordered locus">LGAS_0298</name>
</gene>
<keyword id="KW-0687">Ribonucleoprotein</keyword>
<keyword id="KW-0689">Ribosomal protein</keyword>
<keyword id="KW-0694">RNA-binding</keyword>
<keyword id="KW-0699">rRNA-binding</keyword>
<keyword id="KW-0820">tRNA-binding</keyword>
<proteinExistence type="inferred from homology"/>
<evidence type="ECO:0000255" key="1">
    <source>
        <dbReference type="HAMAP-Rule" id="MF_01342"/>
    </source>
</evidence>
<evidence type="ECO:0000305" key="2"/>
<feature type="chain" id="PRO_1000054641" description="Large ribosomal subunit protein uL16">
    <location>
        <begin position="1"/>
        <end position="145"/>
    </location>
</feature>
<sequence length="145" mass="16033">MLVPKRVKHRREFRGKMRGEAKGGKTIAFGEYGLEAVESHWITNRQIEAARIAMTRFMKRGGRVWIRIFPQKSYTAKGVGVRMGSGKGAPAGWVAVVKRGKIMFEIGGVSEDVAREALRLASNKLPIKTKFVKKSSEVGGESNEG</sequence>
<organism>
    <name type="scientific">Lactobacillus gasseri (strain ATCC 33323 / DSM 20243 / BCRC 14619 / CIP 102991 / JCM 1131 / KCTC 3163 / NCIMB 11718 / NCTC 13722 / AM63)</name>
    <dbReference type="NCBI Taxonomy" id="324831"/>
    <lineage>
        <taxon>Bacteria</taxon>
        <taxon>Bacillati</taxon>
        <taxon>Bacillota</taxon>
        <taxon>Bacilli</taxon>
        <taxon>Lactobacillales</taxon>
        <taxon>Lactobacillaceae</taxon>
        <taxon>Lactobacillus</taxon>
    </lineage>
</organism>